<name>SYQ_ECO57</name>
<comment type="catalytic activity">
    <reaction evidence="2">
        <text>tRNA(Gln) + L-glutamine + ATP = L-glutaminyl-tRNA(Gln) + AMP + diphosphate</text>
        <dbReference type="Rhea" id="RHEA:20121"/>
        <dbReference type="Rhea" id="RHEA-COMP:9662"/>
        <dbReference type="Rhea" id="RHEA-COMP:9681"/>
        <dbReference type="ChEBI" id="CHEBI:30616"/>
        <dbReference type="ChEBI" id="CHEBI:33019"/>
        <dbReference type="ChEBI" id="CHEBI:58359"/>
        <dbReference type="ChEBI" id="CHEBI:78442"/>
        <dbReference type="ChEBI" id="CHEBI:78521"/>
        <dbReference type="ChEBI" id="CHEBI:456215"/>
        <dbReference type="EC" id="6.1.1.18"/>
    </reaction>
</comment>
<comment type="subunit">
    <text evidence="2">Monomer.</text>
</comment>
<comment type="subcellular location">
    <subcellularLocation>
        <location evidence="2">Cytoplasm</location>
    </subcellularLocation>
</comment>
<comment type="similarity">
    <text evidence="2 3">Belongs to the class-I aminoacyl-tRNA synthetase family.</text>
</comment>
<keyword id="KW-0030">Aminoacyl-tRNA synthetase</keyword>
<keyword id="KW-0067">ATP-binding</keyword>
<keyword id="KW-0963">Cytoplasm</keyword>
<keyword id="KW-0436">Ligase</keyword>
<keyword id="KW-0547">Nucleotide-binding</keyword>
<keyword id="KW-0648">Protein biosynthesis</keyword>
<keyword id="KW-1185">Reference proteome</keyword>
<evidence type="ECO:0000250" key="1"/>
<evidence type="ECO:0000255" key="2">
    <source>
        <dbReference type="HAMAP-Rule" id="MF_00126"/>
    </source>
</evidence>
<evidence type="ECO:0000305" key="3"/>
<accession>Q8X9H8</accession>
<dbReference type="EC" id="6.1.1.18" evidence="2"/>
<dbReference type="EMBL" id="AE005174">
    <property type="protein sequence ID" value="AAG55002.1"/>
    <property type="molecule type" value="Genomic_DNA"/>
</dbReference>
<dbReference type="EMBL" id="BA000007">
    <property type="protein sequence ID" value="BAB34133.1"/>
    <property type="molecule type" value="Genomic_DNA"/>
</dbReference>
<dbReference type="PIR" id="F85567">
    <property type="entry name" value="F85567"/>
</dbReference>
<dbReference type="PIR" id="F90717">
    <property type="entry name" value="F90717"/>
</dbReference>
<dbReference type="RefSeq" id="NP_308737.1">
    <property type="nucleotide sequence ID" value="NC_002695.1"/>
</dbReference>
<dbReference type="RefSeq" id="WP_001287136.1">
    <property type="nucleotide sequence ID" value="NZ_VOAI01000012.1"/>
</dbReference>
<dbReference type="SMR" id="Q8X9H8"/>
<dbReference type="STRING" id="155864.Z0827"/>
<dbReference type="GeneID" id="917079"/>
<dbReference type="KEGG" id="ece:Z0827"/>
<dbReference type="KEGG" id="ecs:ECs_0710"/>
<dbReference type="PATRIC" id="fig|386585.9.peg.824"/>
<dbReference type="eggNOG" id="COG0008">
    <property type="taxonomic scope" value="Bacteria"/>
</dbReference>
<dbReference type="HOGENOM" id="CLU_001882_2_3_6"/>
<dbReference type="OMA" id="TWCIYPM"/>
<dbReference type="Proteomes" id="UP000000558">
    <property type="component" value="Chromosome"/>
</dbReference>
<dbReference type="Proteomes" id="UP000002519">
    <property type="component" value="Chromosome"/>
</dbReference>
<dbReference type="GO" id="GO:0005829">
    <property type="term" value="C:cytosol"/>
    <property type="evidence" value="ECO:0007669"/>
    <property type="project" value="TreeGrafter"/>
</dbReference>
<dbReference type="GO" id="GO:0005524">
    <property type="term" value="F:ATP binding"/>
    <property type="evidence" value="ECO:0007669"/>
    <property type="project" value="UniProtKB-UniRule"/>
</dbReference>
<dbReference type="GO" id="GO:0004819">
    <property type="term" value="F:glutamine-tRNA ligase activity"/>
    <property type="evidence" value="ECO:0007669"/>
    <property type="project" value="UniProtKB-UniRule"/>
</dbReference>
<dbReference type="GO" id="GO:0006425">
    <property type="term" value="P:glutaminyl-tRNA aminoacylation"/>
    <property type="evidence" value="ECO:0007669"/>
    <property type="project" value="InterPro"/>
</dbReference>
<dbReference type="GO" id="GO:0006424">
    <property type="term" value="P:glutamyl-tRNA aminoacylation"/>
    <property type="evidence" value="ECO:0007669"/>
    <property type="project" value="UniProtKB-UniRule"/>
</dbReference>
<dbReference type="CDD" id="cd00807">
    <property type="entry name" value="GlnRS_core"/>
    <property type="match status" value="1"/>
</dbReference>
<dbReference type="FunFam" id="1.10.1160.10:FF:000001">
    <property type="entry name" value="Glutamine--tRNA ligase"/>
    <property type="match status" value="1"/>
</dbReference>
<dbReference type="FunFam" id="2.40.240.10:FF:000001">
    <property type="entry name" value="Glutamine--tRNA ligase"/>
    <property type="match status" value="1"/>
</dbReference>
<dbReference type="FunFam" id="2.40.240.10:FF:000003">
    <property type="entry name" value="Glutamine--tRNA ligase"/>
    <property type="match status" value="1"/>
</dbReference>
<dbReference type="FunFam" id="3.90.800.10:FF:000001">
    <property type="entry name" value="Glutamine--tRNA ligase"/>
    <property type="match status" value="1"/>
</dbReference>
<dbReference type="FunFam" id="3.40.50.620:FF:000037">
    <property type="entry name" value="Glutamine--tRNA ligase cytoplasmic"/>
    <property type="match status" value="1"/>
</dbReference>
<dbReference type="Gene3D" id="1.10.1160.10">
    <property type="entry name" value="Glutamyl-trna Synthetase, Domain 2"/>
    <property type="match status" value="1"/>
</dbReference>
<dbReference type="Gene3D" id="3.90.800.10">
    <property type="entry name" value="Glutamyl-tRNA Synthetase, Domain 3"/>
    <property type="match status" value="1"/>
</dbReference>
<dbReference type="Gene3D" id="3.40.50.620">
    <property type="entry name" value="HUPs"/>
    <property type="match status" value="1"/>
</dbReference>
<dbReference type="Gene3D" id="2.40.240.10">
    <property type="entry name" value="Ribosomal Protein L25, Chain P"/>
    <property type="match status" value="2"/>
</dbReference>
<dbReference type="HAMAP" id="MF_00126">
    <property type="entry name" value="Gln_tRNA_synth"/>
    <property type="match status" value="1"/>
</dbReference>
<dbReference type="InterPro" id="IPR001412">
    <property type="entry name" value="aa-tRNA-synth_I_CS"/>
</dbReference>
<dbReference type="InterPro" id="IPR004514">
    <property type="entry name" value="Gln-tRNA-synth"/>
</dbReference>
<dbReference type="InterPro" id="IPR050132">
    <property type="entry name" value="Gln/Glu-tRNA_Ligase"/>
</dbReference>
<dbReference type="InterPro" id="IPR022861">
    <property type="entry name" value="Gln_tRNA_ligase_bac"/>
</dbReference>
<dbReference type="InterPro" id="IPR000924">
    <property type="entry name" value="Glu/Gln-tRNA-synth"/>
</dbReference>
<dbReference type="InterPro" id="IPR020058">
    <property type="entry name" value="Glu/Gln-tRNA-synth_Ib_cat-dom"/>
</dbReference>
<dbReference type="InterPro" id="IPR020059">
    <property type="entry name" value="Glu/Gln-tRNA-synth_Ib_codon-bd"/>
</dbReference>
<dbReference type="InterPro" id="IPR020061">
    <property type="entry name" value="Glu_tRNA_lig_a-bdl"/>
</dbReference>
<dbReference type="InterPro" id="IPR020056">
    <property type="entry name" value="Rbsml_bL25/Gln-tRNA_synth_N"/>
</dbReference>
<dbReference type="InterPro" id="IPR011035">
    <property type="entry name" value="Ribosomal_bL25/Gln-tRNA_synth"/>
</dbReference>
<dbReference type="InterPro" id="IPR014729">
    <property type="entry name" value="Rossmann-like_a/b/a_fold"/>
</dbReference>
<dbReference type="InterPro" id="IPR049437">
    <property type="entry name" value="tRNA-synt_1c_C2"/>
</dbReference>
<dbReference type="NCBIfam" id="TIGR00440">
    <property type="entry name" value="glnS"/>
    <property type="match status" value="1"/>
</dbReference>
<dbReference type="NCBIfam" id="NF011291">
    <property type="entry name" value="PRK14703.1"/>
    <property type="match status" value="1"/>
</dbReference>
<dbReference type="PANTHER" id="PTHR43097:SF5">
    <property type="entry name" value="GLUTAMATE--TRNA LIGASE"/>
    <property type="match status" value="1"/>
</dbReference>
<dbReference type="PANTHER" id="PTHR43097">
    <property type="entry name" value="GLUTAMINE-TRNA LIGASE"/>
    <property type="match status" value="1"/>
</dbReference>
<dbReference type="Pfam" id="PF00749">
    <property type="entry name" value="tRNA-synt_1c"/>
    <property type="match status" value="1"/>
</dbReference>
<dbReference type="Pfam" id="PF03950">
    <property type="entry name" value="tRNA-synt_1c_C"/>
    <property type="match status" value="1"/>
</dbReference>
<dbReference type="Pfam" id="PF20974">
    <property type="entry name" value="tRNA-synt_1c_C2"/>
    <property type="match status" value="1"/>
</dbReference>
<dbReference type="PRINTS" id="PR00987">
    <property type="entry name" value="TRNASYNTHGLU"/>
</dbReference>
<dbReference type="SUPFAM" id="SSF52374">
    <property type="entry name" value="Nucleotidylyl transferase"/>
    <property type="match status" value="1"/>
</dbReference>
<dbReference type="SUPFAM" id="SSF50715">
    <property type="entry name" value="Ribosomal protein L25-like"/>
    <property type="match status" value="1"/>
</dbReference>
<dbReference type="PROSITE" id="PS00178">
    <property type="entry name" value="AA_TRNA_LIGASE_I"/>
    <property type="match status" value="1"/>
</dbReference>
<sequence>MSEAEARPTNFIRQIIDEDLASGKHTTVHTRFPPEPNGYLHIGHAKSICLNFGIAQDYKGQCNLRFDDTNPVKEDIEYVDSIKNDVEWLGFHWSGNVRYSSDYFDQLHAYAIELINKGLAYVDELTPEQIREYRGTLTQPGKNSPYRDRSVEENLALFEKMRTGGFEEGKACLRAKIDMASPFIVMRDPVLYRIKFAEHHQTGNKWCIYPMYDFTHCISDALEGITHSLCTLEFQDNRRLYDWVLDNITIPVHPRQYEFSRLNLEYTVMSKRKLNLLVTDKHVEGWDDPRMPTISGLRRRGYTAASIREFCKRIGVTKQDNTIEMASLESCIREDLNENAPRAMAVIDPVKLVIENYQGEGEMVTMPNHPNKPEMGSRQVPFSGEIWIDRSDFREEANKQYKRLVLGKEVRLRNAYVIKAERVEKDAEGNITTIFCTYDADTLSKDPADGRKVKGVIHWVSAAHALPVEIRLYDRLFSVPNPGAADDFLSVINPESLVIKQGFAEPSLKDAVAGKAFQFEREGYFCLDSRHSTAEKPVFNRTVGLRDTWAKVGE</sequence>
<reference key="1">
    <citation type="journal article" date="2001" name="Nature">
        <title>Genome sequence of enterohaemorrhagic Escherichia coli O157:H7.</title>
        <authorList>
            <person name="Perna N.T."/>
            <person name="Plunkett G. III"/>
            <person name="Burland V."/>
            <person name="Mau B."/>
            <person name="Glasner J.D."/>
            <person name="Rose D.J."/>
            <person name="Mayhew G.F."/>
            <person name="Evans P.S."/>
            <person name="Gregor J."/>
            <person name="Kirkpatrick H.A."/>
            <person name="Posfai G."/>
            <person name="Hackett J."/>
            <person name="Klink S."/>
            <person name="Boutin A."/>
            <person name="Shao Y."/>
            <person name="Miller L."/>
            <person name="Grotbeck E.J."/>
            <person name="Davis N.W."/>
            <person name="Lim A."/>
            <person name="Dimalanta E.T."/>
            <person name="Potamousis K."/>
            <person name="Apodaca J."/>
            <person name="Anantharaman T.S."/>
            <person name="Lin J."/>
            <person name="Yen G."/>
            <person name="Schwartz D.C."/>
            <person name="Welch R.A."/>
            <person name="Blattner F.R."/>
        </authorList>
    </citation>
    <scope>NUCLEOTIDE SEQUENCE [LARGE SCALE GENOMIC DNA]</scope>
    <source>
        <strain>O157:H7 / EDL933 / ATCC 700927 / EHEC</strain>
    </source>
</reference>
<reference key="2">
    <citation type="journal article" date="2001" name="DNA Res.">
        <title>Complete genome sequence of enterohemorrhagic Escherichia coli O157:H7 and genomic comparison with a laboratory strain K-12.</title>
        <authorList>
            <person name="Hayashi T."/>
            <person name="Makino K."/>
            <person name="Ohnishi M."/>
            <person name="Kurokawa K."/>
            <person name="Ishii K."/>
            <person name="Yokoyama K."/>
            <person name="Han C.-G."/>
            <person name="Ohtsubo E."/>
            <person name="Nakayama K."/>
            <person name="Murata T."/>
            <person name="Tanaka M."/>
            <person name="Tobe T."/>
            <person name="Iida T."/>
            <person name="Takami H."/>
            <person name="Honda T."/>
            <person name="Sasakawa C."/>
            <person name="Ogasawara N."/>
            <person name="Yasunaga T."/>
            <person name="Kuhara S."/>
            <person name="Shiba T."/>
            <person name="Hattori M."/>
            <person name="Shinagawa H."/>
        </authorList>
    </citation>
    <scope>NUCLEOTIDE SEQUENCE [LARGE SCALE GENOMIC DNA]</scope>
    <source>
        <strain>O157:H7 / Sakai / RIMD 0509952 / EHEC</strain>
    </source>
</reference>
<protein>
    <recommendedName>
        <fullName evidence="2">Glutamine--tRNA ligase</fullName>
        <ecNumber evidence="2">6.1.1.18</ecNumber>
    </recommendedName>
    <alternativeName>
        <fullName evidence="2">Glutaminyl-tRNA synthetase</fullName>
        <shortName evidence="2">GlnRS</shortName>
    </alternativeName>
</protein>
<gene>
    <name evidence="2" type="primary">glnS</name>
    <name type="ordered locus">Z0827</name>
    <name type="ordered locus">ECs0710</name>
</gene>
<proteinExistence type="inferred from homology"/>
<feature type="initiator methionine" description="Removed" evidence="1">
    <location>
        <position position="1"/>
    </location>
</feature>
<feature type="chain" id="PRO_0000195835" description="Glutamine--tRNA ligase">
    <location>
        <begin position="2"/>
        <end position="554"/>
    </location>
</feature>
<feature type="region of interest" description="Interaction with tRNA" evidence="2">
    <location>
        <begin position="317"/>
        <end position="324"/>
    </location>
</feature>
<feature type="short sequence motif" description="'HIGH' region" evidence="2">
    <location>
        <begin position="34"/>
        <end position="44"/>
    </location>
</feature>
<feature type="short sequence motif" description="'KMSKS' region" evidence="2">
    <location>
        <begin position="268"/>
        <end position="272"/>
    </location>
</feature>
<feature type="binding site" evidence="2">
    <location>
        <begin position="35"/>
        <end position="37"/>
    </location>
    <ligand>
        <name>ATP</name>
        <dbReference type="ChEBI" id="CHEBI:30616"/>
    </ligand>
</feature>
<feature type="binding site" evidence="2">
    <location>
        <begin position="41"/>
        <end position="47"/>
    </location>
    <ligand>
        <name>ATP</name>
        <dbReference type="ChEBI" id="CHEBI:30616"/>
    </ligand>
</feature>
<feature type="binding site" evidence="2">
    <location>
        <position position="67"/>
    </location>
    <ligand>
        <name>L-glutamine</name>
        <dbReference type="ChEBI" id="CHEBI:58359"/>
    </ligand>
</feature>
<feature type="binding site" evidence="2">
    <location>
        <position position="212"/>
    </location>
    <ligand>
        <name>L-glutamine</name>
        <dbReference type="ChEBI" id="CHEBI:58359"/>
    </ligand>
</feature>
<feature type="binding site" evidence="2">
    <location>
        <position position="231"/>
    </location>
    <ligand>
        <name>ATP</name>
        <dbReference type="ChEBI" id="CHEBI:30616"/>
    </ligand>
</feature>
<feature type="binding site" evidence="2">
    <location>
        <begin position="261"/>
        <end position="262"/>
    </location>
    <ligand>
        <name>ATP</name>
        <dbReference type="ChEBI" id="CHEBI:30616"/>
    </ligand>
</feature>
<feature type="binding site" evidence="2">
    <location>
        <begin position="269"/>
        <end position="271"/>
    </location>
    <ligand>
        <name>ATP</name>
        <dbReference type="ChEBI" id="CHEBI:30616"/>
    </ligand>
</feature>
<organism>
    <name type="scientific">Escherichia coli O157:H7</name>
    <dbReference type="NCBI Taxonomy" id="83334"/>
    <lineage>
        <taxon>Bacteria</taxon>
        <taxon>Pseudomonadati</taxon>
        <taxon>Pseudomonadota</taxon>
        <taxon>Gammaproteobacteria</taxon>
        <taxon>Enterobacterales</taxon>
        <taxon>Enterobacteriaceae</taxon>
        <taxon>Escherichia</taxon>
    </lineage>
</organism>